<gene>
    <name evidence="7" type="primary">PIF6</name>
    <name type="ORF">Tb10.70.7240</name>
</gene>
<accession>Q38CE9</accession>
<keyword id="KW-0067">ATP-binding</keyword>
<keyword id="KW-0227">DNA damage</keyword>
<keyword id="KW-0233">DNA recombination</keyword>
<keyword id="KW-0234">DNA repair</keyword>
<keyword id="KW-0238">DNA-binding</keyword>
<keyword id="KW-0347">Helicase</keyword>
<keyword id="KW-0378">Hydrolase</keyword>
<keyword id="KW-0413">Isomerase</keyword>
<keyword id="KW-0547">Nucleotide-binding</keyword>
<keyword id="KW-0539">Nucleus</keyword>
<keyword id="KW-1185">Reference proteome</keyword>
<reference key="1">
    <citation type="journal article" date="2005" name="Science">
        <title>The genome of the African trypanosome Trypanosoma brucei.</title>
        <authorList>
            <person name="Berriman M."/>
            <person name="Ghedin E."/>
            <person name="Hertz-Fowler C."/>
            <person name="Blandin G."/>
            <person name="Renauld H."/>
            <person name="Bartholomeu D.C."/>
            <person name="Lennard N.J."/>
            <person name="Caler E."/>
            <person name="Hamlin N.E."/>
            <person name="Haas B."/>
            <person name="Bohme U."/>
            <person name="Hannick L."/>
            <person name="Aslett M.A."/>
            <person name="Shallom J."/>
            <person name="Marcello L."/>
            <person name="Hou L."/>
            <person name="Wickstead B."/>
            <person name="Alsmark U.C.M."/>
            <person name="Arrowsmith C."/>
            <person name="Atkin R.J."/>
            <person name="Barron A.J."/>
            <person name="Bringaud F."/>
            <person name="Brooks K."/>
            <person name="Carrington M."/>
            <person name="Cherevach I."/>
            <person name="Chillingworth T.J."/>
            <person name="Churcher C."/>
            <person name="Clark L.N."/>
            <person name="Corton C.H."/>
            <person name="Cronin A."/>
            <person name="Davies R.M."/>
            <person name="Doggett J."/>
            <person name="Djikeng A."/>
            <person name="Feldblyum T."/>
            <person name="Field M.C."/>
            <person name="Fraser A."/>
            <person name="Goodhead I."/>
            <person name="Hance Z."/>
            <person name="Harper D."/>
            <person name="Harris B.R."/>
            <person name="Hauser H."/>
            <person name="Hostetler J."/>
            <person name="Ivens A."/>
            <person name="Jagels K."/>
            <person name="Johnson D."/>
            <person name="Johnson J."/>
            <person name="Jones K."/>
            <person name="Kerhornou A.X."/>
            <person name="Koo H."/>
            <person name="Larke N."/>
            <person name="Landfear S."/>
            <person name="Larkin C."/>
            <person name="Leech V."/>
            <person name="Line A."/>
            <person name="Lord A."/>
            <person name="Macleod A."/>
            <person name="Mooney P.J."/>
            <person name="Moule S."/>
            <person name="Martin D.M."/>
            <person name="Morgan G.W."/>
            <person name="Mungall K."/>
            <person name="Norbertczak H."/>
            <person name="Ormond D."/>
            <person name="Pai G."/>
            <person name="Peacock C.S."/>
            <person name="Peterson J."/>
            <person name="Quail M.A."/>
            <person name="Rabbinowitsch E."/>
            <person name="Rajandream M.A."/>
            <person name="Reitter C."/>
            <person name="Salzberg S.L."/>
            <person name="Sanders M."/>
            <person name="Schobel S."/>
            <person name="Sharp S."/>
            <person name="Simmonds M."/>
            <person name="Simpson A.J."/>
            <person name="Tallon L."/>
            <person name="Turner C.M."/>
            <person name="Tait A."/>
            <person name="Tivey A.R."/>
            <person name="Van Aken S."/>
            <person name="Walker D."/>
            <person name="Wanless D."/>
            <person name="Wang S."/>
            <person name="White B."/>
            <person name="White O."/>
            <person name="Whitehead S."/>
            <person name="Woodward J."/>
            <person name="Wortman J."/>
            <person name="Adams M.D."/>
            <person name="Embley T.M."/>
            <person name="Gull K."/>
            <person name="Ullu E."/>
            <person name="Barry J.D."/>
            <person name="Fairlamb A.H."/>
            <person name="Opperdoes F."/>
            <person name="Barrell B.G."/>
            <person name="Donelson J.E."/>
            <person name="Hall N."/>
            <person name="Fraser C.M."/>
            <person name="Melville S.E."/>
            <person name="El-Sayed N.M.A."/>
        </authorList>
    </citation>
    <scope>NUCLEOTIDE SEQUENCE [LARGE SCALE GENOMIC DNA]</scope>
    <source>
        <strain evidence="9">927/4 GUTat10.1</strain>
    </source>
</reference>
<reference key="2">
    <citation type="journal article" date="2009" name="Mol. Cell">
        <title>Trypanosomes have six mitochondrial DNA helicases with one controlling kinetoplast maxicircle replication.</title>
        <authorList>
            <person name="Liu B."/>
            <person name="Wang J."/>
            <person name="Yaffe N."/>
            <person name="Lindsay M.E."/>
            <person name="Zhao Z."/>
            <person name="Zick A."/>
            <person name="Shlomai J."/>
            <person name="Englund P.T."/>
        </authorList>
    </citation>
    <scope>SUBCELLULAR LOCATION</scope>
</reference>
<sequence length="796" mass="88243">MVVLRPKITLTSVRGRIQVTAEDGERVGPWGGTECFLSRQTGQGPCLVVRSSRHKRHQGTFFRLEGVRQVLSLYAMEGKLTVVVPHQKRLCSVFIETFADVDALQMMAATLQDRSRWKDIEKNVACRVQRITRTNVVDTKRITNMDGGTDTHLDYKQFEWGGGEDDSCAVGGVSCNPLEGARGERNGDGVESILQERPTGLPSAHSGGKLPKHMGGDELNPQLEGSTTPGRMQWTTDQIVATRLVCTGSNVFITGSAGTGKTEWLLHLVRNVLPRDDRTVVTASTGMSARLLGGCTIHSFAGIGRGEGGFNRVYNRVKSKPEVVRAWRQCQTLIIDEIGNISPDTFSMIDEIARSLRGAPEKPFGGIQVILLGDFLQLPPVDSPKARNEWTNGNDTDTDSNPIPGKLKWCFETATWESLKLALVGFRKSYRQMNDPDFALCLEDIRFGRYTRRVERILNECSTRQIKERHGIEPTLIVARRDEATEYNAERLKMLEDVHFHRYESEDYAAIPGMNLEKEVSLQQLLELRIGAQVVLLASLPDAPHLSNGDQGVVVSFAEQTRGPALPVVCFATSGGEEVLVPRVSMEVLGPEGRVIATRTQIPLQLSWAITVHRAQGMTLPLVSVRLNKCFFDCGQAYVALSRVRSREDLMLTAFDPSAIFADARAVAFYEKNFPAQRQSVEDTECELVPIKGKTRAKHPRSQGEKNSVDEGGNAPEEHPLRTDAAFTAYHDLDSQVSTDMPLVPQPPRKKRMLVEELPQVTSSAIPNFTQESNNGDANSQLQHPFSQNNLMVDDD</sequence>
<feature type="chain" id="PRO_0000423752" description="ATP-dependent DNA helicase PIF6">
    <location>
        <begin position="1"/>
        <end position="796"/>
    </location>
</feature>
<feature type="DNA-binding region" evidence="4">
    <location>
        <begin position="636"/>
        <end position="655"/>
    </location>
</feature>
<feature type="region of interest" description="Disordered" evidence="5">
    <location>
        <begin position="197"/>
        <end position="230"/>
    </location>
</feature>
<feature type="region of interest" description="Disordered" evidence="5">
    <location>
        <begin position="692"/>
        <end position="719"/>
    </location>
</feature>
<feature type="region of interest" description="Disordered" evidence="5">
    <location>
        <begin position="762"/>
        <end position="796"/>
    </location>
</feature>
<feature type="binding site" evidence="4">
    <location>
        <begin position="255"/>
        <end position="262"/>
    </location>
    <ligand>
        <name>ATP</name>
        <dbReference type="ChEBI" id="CHEBI:30616"/>
    </ligand>
</feature>
<dbReference type="EC" id="5.6.2.3" evidence="2"/>
<dbReference type="EMBL" id="CM000208">
    <property type="protein sequence ID" value="EAN77521.1"/>
    <property type="molecule type" value="Genomic_DNA"/>
</dbReference>
<dbReference type="RefSeq" id="XP_822349.1">
    <property type="nucleotide sequence ID" value="XM_817256.1"/>
</dbReference>
<dbReference type="SMR" id="Q38CE9"/>
<dbReference type="FunCoup" id="Q38CE9">
    <property type="interactions" value="140"/>
</dbReference>
<dbReference type="STRING" id="185431.Q38CE9"/>
<dbReference type="PaxDb" id="5691-EAN77521"/>
<dbReference type="GeneID" id="3662392"/>
<dbReference type="KEGG" id="tbr:Tb10.70.7240"/>
<dbReference type="VEuPathDB" id="TriTrypDB:Tb927.10.910"/>
<dbReference type="eggNOG" id="KOG0987">
    <property type="taxonomic scope" value="Eukaryota"/>
</dbReference>
<dbReference type="InParanoid" id="Q38CE9"/>
<dbReference type="OMA" id="WKDMERN"/>
<dbReference type="OrthoDB" id="272985at2759"/>
<dbReference type="Proteomes" id="UP000008524">
    <property type="component" value="Chromosome 10"/>
</dbReference>
<dbReference type="GO" id="GO:0005737">
    <property type="term" value="C:cytoplasm"/>
    <property type="evidence" value="ECO:0000314"/>
    <property type="project" value="GeneDB"/>
</dbReference>
<dbReference type="GO" id="GO:0005739">
    <property type="term" value="C:mitochondrion"/>
    <property type="evidence" value="ECO:0000318"/>
    <property type="project" value="GO_Central"/>
</dbReference>
<dbReference type="GO" id="GO:0031981">
    <property type="term" value="C:nuclear lumen"/>
    <property type="evidence" value="ECO:0000314"/>
    <property type="project" value="GeneDB"/>
</dbReference>
<dbReference type="GO" id="GO:0005634">
    <property type="term" value="C:nucleus"/>
    <property type="evidence" value="ECO:0000314"/>
    <property type="project" value="GeneDB"/>
</dbReference>
<dbReference type="GO" id="GO:0043139">
    <property type="term" value="F:5'-3' DNA helicase activity"/>
    <property type="evidence" value="ECO:0000318"/>
    <property type="project" value="GO_Central"/>
</dbReference>
<dbReference type="GO" id="GO:0005524">
    <property type="term" value="F:ATP binding"/>
    <property type="evidence" value="ECO:0000305"/>
    <property type="project" value="GeneDB"/>
</dbReference>
<dbReference type="GO" id="GO:0016887">
    <property type="term" value="F:ATP hydrolysis activity"/>
    <property type="evidence" value="ECO:0007669"/>
    <property type="project" value="InterPro"/>
</dbReference>
<dbReference type="GO" id="GO:0003677">
    <property type="term" value="F:DNA binding"/>
    <property type="evidence" value="ECO:0007669"/>
    <property type="project" value="UniProtKB-KW"/>
</dbReference>
<dbReference type="GO" id="GO:0000287">
    <property type="term" value="F:magnesium ion binding"/>
    <property type="evidence" value="ECO:0000305"/>
    <property type="project" value="GeneDB"/>
</dbReference>
<dbReference type="GO" id="GO:0051276">
    <property type="term" value="P:chromosome organization"/>
    <property type="evidence" value="ECO:0000247"/>
    <property type="project" value="GeneDB"/>
</dbReference>
<dbReference type="GO" id="GO:0006310">
    <property type="term" value="P:DNA recombination"/>
    <property type="evidence" value="ECO:0000247"/>
    <property type="project" value="GeneDB"/>
</dbReference>
<dbReference type="GO" id="GO:0006281">
    <property type="term" value="P:DNA repair"/>
    <property type="evidence" value="ECO:0007669"/>
    <property type="project" value="UniProtKB-KW"/>
</dbReference>
<dbReference type="GO" id="GO:0000723">
    <property type="term" value="P:telomere maintenance"/>
    <property type="evidence" value="ECO:0000247"/>
    <property type="project" value="GeneDB"/>
</dbReference>
<dbReference type="CDD" id="cd18037">
    <property type="entry name" value="DEXSc_Pif1_like"/>
    <property type="match status" value="1"/>
</dbReference>
<dbReference type="CDD" id="cd18809">
    <property type="entry name" value="SF1_C_RecD"/>
    <property type="match status" value="1"/>
</dbReference>
<dbReference type="Gene3D" id="3.40.50.300">
    <property type="entry name" value="P-loop containing nucleotide triphosphate hydrolases"/>
    <property type="match status" value="1"/>
</dbReference>
<dbReference type="InterPro" id="IPR003593">
    <property type="entry name" value="AAA+_ATPase"/>
</dbReference>
<dbReference type="InterPro" id="IPR010285">
    <property type="entry name" value="DNA_helicase_pif1-like_DEAD"/>
</dbReference>
<dbReference type="InterPro" id="IPR027417">
    <property type="entry name" value="P-loop_NTPase"/>
</dbReference>
<dbReference type="InterPro" id="IPR051055">
    <property type="entry name" value="PIF1_helicase"/>
</dbReference>
<dbReference type="PANTHER" id="PTHR47642">
    <property type="entry name" value="ATP-DEPENDENT DNA HELICASE"/>
    <property type="match status" value="1"/>
</dbReference>
<dbReference type="PANTHER" id="PTHR47642:SF7">
    <property type="entry name" value="ATP-DEPENDENT DNA HELICASE PIF1"/>
    <property type="match status" value="1"/>
</dbReference>
<dbReference type="Pfam" id="PF05970">
    <property type="entry name" value="PIF1"/>
    <property type="match status" value="1"/>
</dbReference>
<dbReference type="SMART" id="SM00382">
    <property type="entry name" value="AAA"/>
    <property type="match status" value="1"/>
</dbReference>
<dbReference type="SUPFAM" id="SSF52540">
    <property type="entry name" value="P-loop containing nucleoside triphosphate hydrolases"/>
    <property type="match status" value="2"/>
</dbReference>
<name>PIF6_TRYB2</name>
<proteinExistence type="inferred from homology"/>
<evidence type="ECO:0000250" key="1"/>
<evidence type="ECO:0000250" key="2">
    <source>
        <dbReference type="UniProtKB" id="Q384Y0"/>
    </source>
</evidence>
<evidence type="ECO:0000250" key="3">
    <source>
        <dbReference type="UniProtKB" id="Q9H611"/>
    </source>
</evidence>
<evidence type="ECO:0000255" key="4"/>
<evidence type="ECO:0000256" key="5">
    <source>
        <dbReference type="SAM" id="MobiDB-lite"/>
    </source>
</evidence>
<evidence type="ECO:0000269" key="6">
    <source>
    </source>
</evidence>
<evidence type="ECO:0000303" key="7">
    <source>
    </source>
</evidence>
<evidence type="ECO:0000305" key="8"/>
<evidence type="ECO:0000312" key="9">
    <source>
        <dbReference type="Proteomes" id="UP000008524"/>
    </source>
</evidence>
<comment type="function">
    <text evidence="1">DNA-dependent ATPase and 5'-3' DNA helicase required for the maintenance of genome stability.</text>
</comment>
<comment type="catalytic activity">
    <reaction evidence="2">
        <text>Couples ATP hydrolysis with the unwinding of duplex DNA at the replication fork by translocating in the 5'-3' direction. This creates two antiparallel DNA single strands (ssDNA). The leading ssDNA polymer is the template for DNA polymerase III holoenzyme which synthesizes a continuous strand.</text>
        <dbReference type="EC" id="5.6.2.3"/>
    </reaction>
</comment>
<comment type="catalytic activity">
    <reaction evidence="2">
        <text>ATP + H2O = ADP + phosphate + H(+)</text>
        <dbReference type="Rhea" id="RHEA:13065"/>
        <dbReference type="ChEBI" id="CHEBI:15377"/>
        <dbReference type="ChEBI" id="CHEBI:15378"/>
        <dbReference type="ChEBI" id="CHEBI:30616"/>
        <dbReference type="ChEBI" id="CHEBI:43474"/>
        <dbReference type="ChEBI" id="CHEBI:456216"/>
        <dbReference type="EC" id="5.6.2.3"/>
    </reaction>
</comment>
<comment type="cofactor">
    <cofactor evidence="2">
        <name>Mg(2+)</name>
        <dbReference type="ChEBI" id="CHEBI:18420"/>
    </cofactor>
</comment>
<comment type="subunit">
    <text evidence="1 3">Monomer.</text>
</comment>
<comment type="subcellular location">
    <subcellularLocation>
        <location evidence="6">Nucleus</location>
    </subcellularLocation>
</comment>
<comment type="similarity">
    <text evidence="8">Belongs to the helicase family. PIF1 subfamily.</text>
</comment>
<protein>
    <recommendedName>
        <fullName evidence="7">ATP-dependent DNA helicase PIF6</fullName>
        <ecNumber evidence="2">5.6.2.3</ecNumber>
    </recommendedName>
    <alternativeName>
        <fullName evidence="8">DNA 5'-3' helicase PIF6</fullName>
    </alternativeName>
    <alternativeName>
        <fullName>DNA repair and recombination helicase PIF6</fullName>
    </alternativeName>
</protein>
<organism>
    <name type="scientific">Trypanosoma brucei brucei (strain 927/4 GUTat10.1)</name>
    <dbReference type="NCBI Taxonomy" id="185431"/>
    <lineage>
        <taxon>Eukaryota</taxon>
        <taxon>Discoba</taxon>
        <taxon>Euglenozoa</taxon>
        <taxon>Kinetoplastea</taxon>
        <taxon>Metakinetoplastina</taxon>
        <taxon>Trypanosomatida</taxon>
        <taxon>Trypanosomatidae</taxon>
        <taxon>Trypanosoma</taxon>
    </lineage>
</organism>